<name>MALA_MALAU</name>
<protein>
    <recommendedName>
        <fullName evidence="8">Flavin-dependent halogenase malA</fullName>
        <ecNumber evidence="6">1.14.-.-</ecNumber>
    </recommendedName>
    <alternativeName>
        <fullName evidence="8">Malbrancheamide biosynthesis cluster protein A</fullName>
    </alternativeName>
</protein>
<keyword id="KW-0002">3D-structure</keyword>
<keyword id="KW-0274">FAD</keyword>
<keyword id="KW-0285">Flavoprotein</keyword>
<keyword id="KW-0503">Monooxygenase</keyword>
<keyword id="KW-0560">Oxidoreductase</keyword>
<keyword id="KW-0862">Zinc</keyword>
<sequence length="667" mass="74698">MAPTPKYTFTERAAAGNLSDAEILNSNNPTGSELPDESDVVVGGAGIHGLIYALHASKYKPNNLKISVIEKNTRPGYKIGESTLPIFYTWCKLHGISAAYLLRLFGLKDGLCFYFLDRENQGQYTDFCSVGAPGLVLASLQIERPMSELLFTILAQRNGVNVYHGREVDFKSTVVQGGGQGNKIAVSRGKYDSTPKTIDSALFVDATGRFRQFCSKKAPRHRFDGWNCNAFWGYFTAPKDESKIPFDLYEGDHTNHLCFPEGWVWVIRLPSWEGSLIANLMDMVTYILECADAGVPGDELPSSEELARMFGLKFQWVTSIGFAVRNDVKYPEDLSAYGTREAEQKFNYFVQKYELLQQFMSNFELIENLYGPGTTWFIRKTLAYQSPVVSGPGWLAIGDACGFTNPLYSPGINVGMSTSTWAAQLSHRIVEIGKSAPADAAESSIRKLLVPYDDYCKSLVPALEQMNRFNYVCYRDTRLGPQVACLWQFFAGIERYLSDVNIETFAHYAIKWVWGAMVPEYQQVAQKCIEHIETVPLDERLPDAMVDELLAFSNRIKSAAVAADDFSLRWDAILRSFDRSLNFVEGKTSRDIYTRQCSGCGAWLQLRPDWKKCHSCGLLGTEPQTAVTFDPPLTAEEEALLYAAWNTAPKYDPSKELKLPTPTRPAA</sequence>
<gene>
    <name evidence="8" type="primary">malA</name>
</gene>
<evidence type="ECO:0000269" key="1">
    <source>
    </source>
</evidence>
<evidence type="ECO:0000269" key="2">
    <source>
    </source>
</evidence>
<evidence type="ECO:0000269" key="3">
    <source>
    </source>
</evidence>
<evidence type="ECO:0000269" key="4">
    <source>
    </source>
</evidence>
<evidence type="ECO:0000269" key="5">
    <source>
    </source>
</evidence>
<evidence type="ECO:0000269" key="6">
    <source>
    </source>
</evidence>
<evidence type="ECO:0000269" key="7">
    <source>
    </source>
</evidence>
<evidence type="ECO:0000303" key="8">
    <source>
    </source>
</evidence>
<evidence type="ECO:0000305" key="9"/>
<evidence type="ECO:0007744" key="10">
    <source>
        <dbReference type="PDB" id="5WGR"/>
    </source>
</evidence>
<evidence type="ECO:0007744" key="11">
    <source>
        <dbReference type="PDB" id="5WGS"/>
    </source>
</evidence>
<evidence type="ECO:0007744" key="12">
    <source>
        <dbReference type="PDB" id="5WGT"/>
    </source>
</evidence>
<evidence type="ECO:0007744" key="13">
    <source>
        <dbReference type="PDB" id="5WGU"/>
    </source>
</evidence>
<evidence type="ECO:0007744" key="14">
    <source>
        <dbReference type="PDB" id="5WGV"/>
    </source>
</evidence>
<evidence type="ECO:0007744" key="15">
    <source>
        <dbReference type="PDB" id="5WGW"/>
    </source>
</evidence>
<evidence type="ECO:0007744" key="16">
    <source>
        <dbReference type="PDB" id="5WGX"/>
    </source>
</evidence>
<evidence type="ECO:0007744" key="17">
    <source>
        <dbReference type="PDB" id="5WGY"/>
    </source>
</evidence>
<evidence type="ECO:0007744" key="18">
    <source>
        <dbReference type="PDB" id="5WGZ"/>
    </source>
</evidence>
<evidence type="ECO:0007829" key="19">
    <source>
        <dbReference type="PDB" id="5WGS"/>
    </source>
</evidence>
<evidence type="ECO:0007829" key="20">
    <source>
        <dbReference type="PDB" id="5WGU"/>
    </source>
</evidence>
<evidence type="ECO:0007829" key="21">
    <source>
        <dbReference type="PDB" id="5WGX"/>
    </source>
</evidence>
<evidence type="ECO:0007829" key="22">
    <source>
        <dbReference type="PDB" id="5WGZ"/>
    </source>
</evidence>
<organism>
    <name type="scientific">Malbranchea aurantiaca</name>
    <dbReference type="NCBI Taxonomy" id="78605"/>
    <lineage>
        <taxon>Eukaryota</taxon>
        <taxon>Fungi</taxon>
        <taxon>Dikarya</taxon>
        <taxon>Ascomycota</taxon>
        <taxon>Pezizomycotina</taxon>
        <taxon>Eurotiomycetes</taxon>
        <taxon>Eurotiomycetidae</taxon>
        <taxon>Onygenales</taxon>
        <taxon>Malbrancheaceae</taxon>
        <taxon>Malbranchea</taxon>
    </lineage>
</organism>
<accession>L0E155</accession>
<comment type="function">
    <text evidence="4 6 7">Flavin-dependent halogenase; part of the gene cluster that mediates the biosynthesis of malbrancheamide, a dichlorinated fungal indole alkaloid that belongs to a family of natural products containing a characteristic bicyclo[2.2.2]diazaoctane core (PubMed:23213353, PubMed:28777910, PubMed:31548667). The first step of malbrancheamide biosynthesis involves coupling of L-proline and L-tryptophan by malG, a bimodular NRPS, to produce L-Pro-L-Trp aldehyde through reductive offloading (PubMed:23213353, PubMed:31548667). This compound undergoes spontaneous cyclization and dehydration to give a dienamine which is reverse prenylated at C-2 by malE (PubMed:31548667). The other prenyltransferase present in the cluster, malB, displays modest activity, suggesting that may be a redundant gene in the pathway (PubMed:31548667). Subsequently, a [4+2] Diels-Alder cyclo-addition catalyzed by the bifunctional enzyme malC forms the characteristic bicyclo[2.2.2]diazaoctane ring of premalbrancheamid (PubMed:31548667). Finally, the flavin-dependent halogenase malA catalyzes the iterative dichlorination of the indole ring of premalbrancheamide to yield C-9 monochlorinated malbrancheamide B, C-8 monochlorinated isomalbrancheamide B, and dichlorinated malbrancheamide (PubMed:28777910, PubMed:31548667). MalA is also able to brominate premalbrancheamide at C-9 to yield malbrancheamide C, and, to a lesser extend, at C-8 to yield isomalbrancheamide C (PubMed:28777910). Finally, malA can brominate C-9 monochlorinated malbrancheamide B at C-8 to yield malbrancheamide D, or C-8 monochlorinated isomalbrancheamide B at C-9 to produce isomalbrancheamide D (PubMed:28777910).</text>
</comment>
<comment type="catalytic activity">
    <reaction evidence="6">
        <text>(+)-premalbrancheamide + 2 FAD + 2 chloride + 4 H(+) = (+)-malbrancheamide + 2 FADH2</text>
        <dbReference type="Rhea" id="RHEA:62296"/>
        <dbReference type="ChEBI" id="CHEBI:15378"/>
        <dbReference type="ChEBI" id="CHEBI:17996"/>
        <dbReference type="ChEBI" id="CHEBI:57692"/>
        <dbReference type="ChEBI" id="CHEBI:58307"/>
        <dbReference type="ChEBI" id="CHEBI:145651"/>
        <dbReference type="ChEBI" id="CHEBI:145658"/>
    </reaction>
    <physiologicalReaction direction="left-to-right" evidence="6">
        <dbReference type="Rhea" id="RHEA:62297"/>
    </physiologicalReaction>
</comment>
<comment type="catalytic activity">
    <reaction evidence="6">
        <text>(+)-premalbrancheamide + FAD + chloride + 2 H(+) = (+)-malbrancheamide B + FADH2</text>
        <dbReference type="Rhea" id="RHEA:62308"/>
        <dbReference type="ChEBI" id="CHEBI:15378"/>
        <dbReference type="ChEBI" id="CHEBI:17996"/>
        <dbReference type="ChEBI" id="CHEBI:57692"/>
        <dbReference type="ChEBI" id="CHEBI:58307"/>
        <dbReference type="ChEBI" id="CHEBI:145658"/>
        <dbReference type="ChEBI" id="CHEBI:145677"/>
    </reaction>
    <physiologicalReaction direction="left-to-right" evidence="6">
        <dbReference type="Rhea" id="RHEA:62309"/>
    </physiologicalReaction>
</comment>
<comment type="catalytic activity">
    <reaction evidence="6">
        <text>(+)-premalbrancheamide + FAD + chloride + 2 H(+) = (+)-isomalbrancheamide B + FADH2</text>
        <dbReference type="Rhea" id="RHEA:62320"/>
        <dbReference type="ChEBI" id="CHEBI:15378"/>
        <dbReference type="ChEBI" id="CHEBI:17996"/>
        <dbReference type="ChEBI" id="CHEBI:57692"/>
        <dbReference type="ChEBI" id="CHEBI:58307"/>
        <dbReference type="ChEBI" id="CHEBI:145658"/>
        <dbReference type="ChEBI" id="CHEBI:145678"/>
    </reaction>
    <physiologicalReaction direction="left-to-right" evidence="6">
        <dbReference type="Rhea" id="RHEA:62321"/>
    </physiologicalReaction>
</comment>
<comment type="catalytic activity">
    <reaction evidence="6">
        <text>(+)-malbrancheamide B + FAD + chloride + 2 H(+) = (+)-malbrancheamide + FADH2</text>
        <dbReference type="Rhea" id="RHEA:62324"/>
        <dbReference type="ChEBI" id="CHEBI:15378"/>
        <dbReference type="ChEBI" id="CHEBI:17996"/>
        <dbReference type="ChEBI" id="CHEBI:57692"/>
        <dbReference type="ChEBI" id="CHEBI:58307"/>
        <dbReference type="ChEBI" id="CHEBI:145651"/>
        <dbReference type="ChEBI" id="CHEBI:145677"/>
    </reaction>
    <physiologicalReaction direction="left-to-right" evidence="6">
        <dbReference type="Rhea" id="RHEA:62325"/>
    </physiologicalReaction>
</comment>
<comment type="catalytic activity">
    <reaction evidence="6">
        <text>(+)-isomalbrancheamide B + FAD + chloride + 2 H(+) = (+)-malbrancheamide + FADH2</text>
        <dbReference type="Rhea" id="RHEA:62328"/>
        <dbReference type="ChEBI" id="CHEBI:15378"/>
        <dbReference type="ChEBI" id="CHEBI:17996"/>
        <dbReference type="ChEBI" id="CHEBI:57692"/>
        <dbReference type="ChEBI" id="CHEBI:58307"/>
        <dbReference type="ChEBI" id="CHEBI:145651"/>
        <dbReference type="ChEBI" id="CHEBI:145678"/>
    </reaction>
    <physiologicalReaction direction="left-to-right" evidence="6">
        <dbReference type="Rhea" id="RHEA:62329"/>
    </physiologicalReaction>
</comment>
<comment type="catalytic activity">
    <reaction evidence="6">
        <text>(+)-premalbrancheamide + bromide + FAD + 2 H(+) = (+)-malbrancheamide C + FADH2</text>
        <dbReference type="Rhea" id="RHEA:62340"/>
        <dbReference type="ChEBI" id="CHEBI:15378"/>
        <dbReference type="ChEBI" id="CHEBI:15858"/>
        <dbReference type="ChEBI" id="CHEBI:57692"/>
        <dbReference type="ChEBI" id="CHEBI:58307"/>
        <dbReference type="ChEBI" id="CHEBI:145658"/>
        <dbReference type="ChEBI" id="CHEBI:145679"/>
    </reaction>
    <physiologicalReaction direction="left-to-right" evidence="6">
        <dbReference type="Rhea" id="RHEA:62341"/>
    </physiologicalReaction>
</comment>
<comment type="catalytic activity">
    <reaction evidence="6">
        <text>(+)-premalbrancheamide + bromide + FAD + 2 H(+) = (+)-isomalbrancheamide C + FADH2</text>
        <dbReference type="Rhea" id="RHEA:62724"/>
        <dbReference type="ChEBI" id="CHEBI:15378"/>
        <dbReference type="ChEBI" id="CHEBI:15858"/>
        <dbReference type="ChEBI" id="CHEBI:57692"/>
        <dbReference type="ChEBI" id="CHEBI:58307"/>
        <dbReference type="ChEBI" id="CHEBI:145658"/>
        <dbReference type="ChEBI" id="CHEBI:145680"/>
    </reaction>
    <physiologicalReaction direction="left-to-right" evidence="6">
        <dbReference type="Rhea" id="RHEA:62725"/>
    </physiologicalReaction>
</comment>
<comment type="catalytic activity">
    <reaction evidence="6">
        <text>(+)-malbrancheamide B + bromide + FAD + 2 H(+) = (+)-malbrancheamide D + FADH2</text>
        <dbReference type="Rhea" id="RHEA:62728"/>
        <dbReference type="ChEBI" id="CHEBI:15378"/>
        <dbReference type="ChEBI" id="CHEBI:15858"/>
        <dbReference type="ChEBI" id="CHEBI:57692"/>
        <dbReference type="ChEBI" id="CHEBI:58307"/>
        <dbReference type="ChEBI" id="CHEBI:145677"/>
        <dbReference type="ChEBI" id="CHEBI:145929"/>
    </reaction>
    <physiologicalReaction direction="left-to-right" evidence="6">
        <dbReference type="Rhea" id="RHEA:62729"/>
    </physiologicalReaction>
</comment>
<comment type="catalytic activity">
    <reaction evidence="6">
        <text>(+)-isomalbrancheamide B + bromide + FAD + 2 H(+) = (+)-isomalbrancheamide D + FADH2</text>
        <dbReference type="Rhea" id="RHEA:62732"/>
        <dbReference type="ChEBI" id="CHEBI:15378"/>
        <dbReference type="ChEBI" id="CHEBI:15858"/>
        <dbReference type="ChEBI" id="CHEBI:57692"/>
        <dbReference type="ChEBI" id="CHEBI:58307"/>
        <dbReference type="ChEBI" id="CHEBI:145678"/>
        <dbReference type="ChEBI" id="CHEBI:145930"/>
    </reaction>
    <physiologicalReaction direction="left-to-right" evidence="6">
        <dbReference type="Rhea" id="RHEA:62733"/>
    </physiologicalReaction>
</comment>
<comment type="cofactor">
    <cofactor evidence="6">
        <name>Zn(2+)</name>
        <dbReference type="ChEBI" id="CHEBI:29105"/>
    </cofactor>
    <text evidence="6">Binds 1 FAD per subunit.</text>
</comment>
<comment type="biophysicochemical properties">
    <kinetics>
        <KM evidence="6">7 uM for premalbrancheamide (to yield malbrancheamide B)</KM>
        <KM evidence="6">7.5 uM for premalbrancheamide (to yield isomalbrancheamide B)</KM>
        <KM evidence="6">4.4 uM for malbrancheamide B (to yield malbrancheamide)</KM>
        <KM evidence="6">4 uM for isomalbrancheamide B (to yield malbrancheamide)</KM>
        <text evidence="6">The catalytic efficiencies were calculated for each of the four reactions, resulting in the kcat/Km values of 11.5, 12.0, 27.3, and 29.7 min(-1) mM(-1), respectively.</text>
    </kinetics>
</comment>
<comment type="pathway">
    <text evidence="6">Alkaloid biosynthesis.</text>
</comment>
<comment type="domain">
    <text evidence="6">The very flexible region (621-646) acts as a substrate channel lid, having two main open/closed conformations.</text>
</comment>
<comment type="biotechnology">
    <text evidence="1 2 3 5">Malbrancheamides have the ability to inhibit calmodulin, calmodulin-dependent phosphodiesterase (PDE1), and induce both endothelium-independent and endothelium-dependent relaxant effects, suggesting their potential as vasorelaxant agents.</text>
</comment>
<comment type="similarity">
    <text evidence="9">Belongs to the flavin-dependent halogenase family.</text>
</comment>
<dbReference type="EC" id="1.14.-.-" evidence="6"/>
<dbReference type="EMBL" id="JQ708193">
    <property type="protein sequence ID" value="AGA37261.1"/>
    <property type="molecule type" value="Genomic_DNA"/>
</dbReference>
<dbReference type="PDB" id="5WGR">
    <property type="method" value="X-ray"/>
    <property type="resolution" value="2.36 A"/>
    <property type="chains" value="A=1-667"/>
</dbReference>
<dbReference type="PDB" id="5WGS">
    <property type="method" value="X-ray"/>
    <property type="resolution" value="2.34 A"/>
    <property type="chains" value="A=1-667"/>
</dbReference>
<dbReference type="PDB" id="5WGT">
    <property type="method" value="X-ray"/>
    <property type="resolution" value="2.09 A"/>
    <property type="chains" value="A=1-667"/>
</dbReference>
<dbReference type="PDB" id="5WGU">
    <property type="method" value="X-ray"/>
    <property type="resolution" value="2.05 A"/>
    <property type="chains" value="A=1-667"/>
</dbReference>
<dbReference type="PDB" id="5WGV">
    <property type="method" value="X-ray"/>
    <property type="resolution" value="2.30 A"/>
    <property type="chains" value="A=1-667"/>
</dbReference>
<dbReference type="PDB" id="5WGW">
    <property type="method" value="X-ray"/>
    <property type="resolution" value="2.09 A"/>
    <property type="chains" value="A=1-667"/>
</dbReference>
<dbReference type="PDB" id="5WGX">
    <property type="method" value="X-ray"/>
    <property type="resolution" value="1.97 A"/>
    <property type="chains" value="A=1-667"/>
</dbReference>
<dbReference type="PDB" id="5WGY">
    <property type="method" value="X-ray"/>
    <property type="resolution" value="2.00 A"/>
    <property type="chains" value="A=1-667"/>
</dbReference>
<dbReference type="PDB" id="5WGZ">
    <property type="method" value="X-ray"/>
    <property type="resolution" value="2.04 A"/>
    <property type="chains" value="A=1-667"/>
</dbReference>
<dbReference type="PDBsum" id="5WGR"/>
<dbReference type="PDBsum" id="5WGS"/>
<dbReference type="PDBsum" id="5WGT"/>
<dbReference type="PDBsum" id="5WGU"/>
<dbReference type="PDBsum" id="5WGV"/>
<dbReference type="PDBsum" id="5WGW"/>
<dbReference type="PDBsum" id="5WGX"/>
<dbReference type="PDBsum" id="5WGY"/>
<dbReference type="PDBsum" id="5WGZ"/>
<dbReference type="SMR" id="L0E155"/>
<dbReference type="BioCyc" id="MetaCyc:MONOMER-21926"/>
<dbReference type="SABIO-RK" id="L0E155"/>
<dbReference type="GO" id="GO:0140907">
    <property type="term" value="F:flavin-dependent halogenase activity"/>
    <property type="evidence" value="ECO:0000314"/>
    <property type="project" value="GO_Central"/>
</dbReference>
<dbReference type="GO" id="GO:0004497">
    <property type="term" value="F:monooxygenase activity"/>
    <property type="evidence" value="ECO:0007669"/>
    <property type="project" value="UniProtKB-KW"/>
</dbReference>
<dbReference type="GO" id="GO:0044550">
    <property type="term" value="P:secondary metabolite biosynthetic process"/>
    <property type="evidence" value="ECO:0000314"/>
    <property type="project" value="GO_Central"/>
</dbReference>
<dbReference type="Gene3D" id="3.50.50.60">
    <property type="entry name" value="FAD/NAD(P)-binding domain"/>
    <property type="match status" value="1"/>
</dbReference>
<dbReference type="InterPro" id="IPR036188">
    <property type="entry name" value="FAD/NAD-bd_sf"/>
</dbReference>
<dbReference type="InterPro" id="IPR050816">
    <property type="entry name" value="Flavin-dep_Halogenase_NPB"/>
</dbReference>
<dbReference type="InterPro" id="IPR006905">
    <property type="entry name" value="Flavin_halogenase"/>
</dbReference>
<dbReference type="PANTHER" id="PTHR43747:SF5">
    <property type="entry name" value="FAD-BINDING DOMAIN-CONTAINING PROTEIN"/>
    <property type="match status" value="1"/>
</dbReference>
<dbReference type="PANTHER" id="PTHR43747">
    <property type="entry name" value="FAD-BINDING PROTEIN"/>
    <property type="match status" value="1"/>
</dbReference>
<dbReference type="Pfam" id="PF04820">
    <property type="entry name" value="Trp_halogenase"/>
    <property type="match status" value="1"/>
</dbReference>
<dbReference type="SUPFAM" id="SSF51905">
    <property type="entry name" value="FAD/NAD(P)-binding domain"/>
    <property type="match status" value="1"/>
</dbReference>
<reference key="1">
    <citation type="journal article" date="2012" name="Med. Chem. Commun.">
        <title>Comparative analysis of the biosynthetic systems for fungal bicyclo[2.2.2]diazaoctane indole alkaloids: the (+)/(-)-notoamide, paraherquamide and malbrancheamide pathways.</title>
        <authorList>
            <person name="Li S."/>
            <person name="Anand K."/>
            <person name="Tran H."/>
            <person name="Yu F."/>
            <person name="Finefield J.M."/>
            <person name="Sunderhaus J.D."/>
            <person name="McAfoos T.J."/>
            <person name="Tsukamoto S."/>
            <person name="Williams R.M."/>
            <person name="Sherman D.H."/>
        </authorList>
    </citation>
    <scope>NUCLEOTIDE SEQUENCE [GENOMIC DNA]</scope>
    <scope>FUNCTION</scope>
    <source>
        <strain>RRC1813</strain>
    </source>
</reference>
<reference key="2">
    <citation type="journal article" date="2008" name="Bioorg. Med. Chem. Lett.">
        <title>Calmodulin inhibitory activity of the malbrancheamides and various analogs.</title>
        <authorList>
            <person name="Miller K.A."/>
            <person name="Figueroa M."/>
            <person name="Valente M.W."/>
            <person name="Greshock T.J."/>
            <person name="Mata R."/>
            <person name="Williams R.M."/>
        </authorList>
    </citation>
    <scope>BIOTECHNOLOGY</scope>
</reference>
<reference key="3">
    <citation type="journal article" date="2009" name="Anal. Biochem.">
        <title>An alternative assay to discover potential calmodulin inhibitors using a human fluorophore-labeled CaM protein.</title>
        <authorList>
            <person name="Gonzalez-Andrade M."/>
            <person name="Figueroa M."/>
            <person name="Rodriguez-Sotres R."/>
            <person name="Mata R."/>
            <person name="Sosa-Peinado A."/>
        </authorList>
    </citation>
    <scope>BIOTECHNOLOGY</scope>
</reference>
<reference key="4">
    <citation type="journal article" date="2011" name="J. Enzym. Inhib. Med. Chem.">
        <title>Fluorescence, circular dichroism, NMR, and docking studies of the interaction of the alkaloid malbrancheamide with calmodulin.</title>
        <authorList>
            <person name="Figueroa M."/>
            <person name="Gonzalez-Andrade M."/>
            <person name="Sosa-Peinado A."/>
            <person name="Madariaga-Mazon A."/>
            <person name="Del Rio-Portilla F."/>
            <person name="Gonzalez M.C."/>
            <person name="Mata R."/>
        </authorList>
    </citation>
    <scope>BIOTECHNOLOGY</scope>
</reference>
<reference key="5">
    <citation type="journal article" date="2015" name="J. Pharm. Pharmacol.">
        <title>Insights on the vasorelaxant mode of action of malbrancheamide.</title>
        <authorList>
            <person name="Madariaga-Mazon A."/>
            <person name="Hernandez-Abreu O."/>
            <person name="Estrada-Soto S."/>
            <person name="Mata R."/>
        </authorList>
    </citation>
    <scope>BIOTECHNOLOGY</scope>
</reference>
<reference key="6">
    <citation type="journal article" date="2019" name="Nat. Chem.">
        <title>Fungal indole alkaloid biogenesis through evolution of a bifunctional reductase/Diels-Alderase.</title>
        <authorList>
            <person name="Dan Q."/>
            <person name="Newmister S.A."/>
            <person name="Klas K.R."/>
            <person name="Fraley A.E."/>
            <person name="McAfoos T.J."/>
            <person name="Somoza A.D."/>
            <person name="Sunderhaus J.D."/>
            <person name="Ye Y."/>
            <person name="Shende V.V."/>
            <person name="Yu F."/>
            <person name="Sanders J.N."/>
            <person name="Brown W.C."/>
            <person name="Zhao L."/>
            <person name="Paton R.S."/>
            <person name="Houk K.N."/>
            <person name="Smith J.L."/>
            <person name="Sherman D.H."/>
            <person name="Williams R.M."/>
        </authorList>
    </citation>
    <scope>FUNCTION</scope>
    <scope>PATHWAY</scope>
</reference>
<reference evidence="10 11 12 13 14 15 16 17 18" key="7">
    <citation type="journal article" date="2017" name="J. Am. Chem. Soc.">
        <title>Function and structure of MalA/MalA', iterative halogenases for late-stage C-H functionalization of indole alkaloids.</title>
        <authorList>
            <person name="Fraley A.E."/>
            <person name="Garcia-Borras M."/>
            <person name="Tripathi A."/>
            <person name="Khare D."/>
            <person name="Mercado-Marin E.V."/>
            <person name="Tran H."/>
            <person name="Dan Q."/>
            <person name="Webb G.P."/>
            <person name="Watts K.R."/>
            <person name="Crews P."/>
            <person name="Sarpong R."/>
            <person name="Williams R.M."/>
            <person name="Smith J.L."/>
            <person name="Houk K.N."/>
            <person name="Sherman D.H."/>
        </authorList>
    </citation>
    <scope>X-RAY CRYSTALLOGRAPHY (1.97 ANGSTROMS)</scope>
    <scope>CATALYTIC ACTIVITY</scope>
    <scope>BIOPHYSICOCHEMICAL PROPERTIES</scope>
    <scope>ACTIVE SITE</scope>
    <scope>MUTAGENESIS OF ASP-109; HIS-253; PHE-489; GLU-494; CYS-613 AND CYS-616</scope>
    <scope>DOMAIN</scope>
</reference>
<feature type="chain" id="PRO_0000448773" description="Flavin-dependent halogenase malA">
    <location>
        <begin position="1"/>
        <end position="667"/>
    </location>
</feature>
<feature type="region of interest" description="Flexible region" evidence="6">
    <location>
        <begin position="621"/>
        <end position="646"/>
    </location>
</feature>
<feature type="active site" evidence="6 10 11 12 13 14 15 16 17 18">
    <location>
        <position position="108"/>
    </location>
</feature>
<feature type="binding site" evidence="6 10 11 12 13 14 15 16 17 18">
    <location>
        <position position="48"/>
    </location>
    <ligand>
        <name>FAD</name>
        <dbReference type="ChEBI" id="CHEBI:57692"/>
    </ligand>
</feature>
<feature type="binding site" evidence="6 10 11 12 13 14 15 16 17 18">
    <location>
        <position position="70"/>
    </location>
    <ligand>
        <name>FAD</name>
        <dbReference type="ChEBI" id="CHEBI:57692"/>
    </ligand>
</feature>
<feature type="binding site" evidence="6 10 11 12 13 14 15 16 17 18">
    <location>
        <position position="79"/>
    </location>
    <ligand>
        <name>FAD</name>
        <dbReference type="ChEBI" id="CHEBI:57692"/>
    </ligand>
</feature>
<feature type="binding site" evidence="6 10 11 12 13 14 15 16 17 18">
    <location>
        <position position="82"/>
    </location>
    <ligand>
        <name>FAD</name>
        <dbReference type="ChEBI" id="CHEBI:57692"/>
    </ligand>
</feature>
<feature type="binding site" evidence="6 10 11 12 13 14 15 16 17 18">
    <location>
        <position position="144"/>
    </location>
    <ligand>
        <name>FAD</name>
        <dbReference type="ChEBI" id="CHEBI:57692"/>
    </ligand>
</feature>
<feature type="binding site" evidence="6 10 11 12 13 14 15 16 17 18">
    <location>
        <position position="168"/>
    </location>
    <ligand>
        <name>FAD</name>
        <dbReference type="ChEBI" id="CHEBI:57692"/>
    </ligand>
</feature>
<feature type="binding site" evidence="6 10 11 12 13 14 15 16 17 18">
    <location>
        <position position="399"/>
    </location>
    <ligand>
        <name>FAD</name>
        <dbReference type="ChEBI" id="CHEBI:57692"/>
    </ligand>
</feature>
<feature type="binding site" evidence="6 10 11 12 13 14 15 16 17 18">
    <location>
        <position position="412"/>
    </location>
    <ligand>
        <name>FAD</name>
        <dbReference type="ChEBI" id="CHEBI:57692"/>
    </ligand>
</feature>
<feature type="binding site" evidence="6 10 11 12 13 14 15 16 17 18">
    <location>
        <position position="494"/>
    </location>
    <ligand>
        <name>substrate</name>
    </ligand>
</feature>
<feature type="binding site" evidence="6 10 11 12 13 14 15 16 17 18">
    <location>
        <position position="597"/>
    </location>
    <ligand>
        <name>Zn(2+)</name>
        <dbReference type="ChEBI" id="CHEBI:29105"/>
    </ligand>
</feature>
<feature type="binding site" evidence="6 10 11 12 13 14 15 16 17 18">
    <location>
        <position position="600"/>
    </location>
    <ligand>
        <name>Zn(2+)</name>
        <dbReference type="ChEBI" id="CHEBI:29105"/>
    </ligand>
</feature>
<feature type="binding site" evidence="6 10 11 12 13 14 15 16 17 18">
    <location>
        <position position="613"/>
    </location>
    <ligand>
        <name>Zn(2+)</name>
        <dbReference type="ChEBI" id="CHEBI:29105"/>
    </ligand>
</feature>
<feature type="binding site" evidence="6 10 11 12 13 14 15 16 17 18">
    <location>
        <position position="616"/>
    </location>
    <ligand>
        <name>Zn(2+)</name>
        <dbReference type="ChEBI" id="CHEBI:29105"/>
    </ligand>
</feature>
<feature type="mutagenesis site" description="Leads to very low malA catalytic activity." evidence="6">
    <original>D</original>
    <variation>A</variation>
    <location>
        <position position="109"/>
    </location>
</feature>
<feature type="mutagenesis site" description="Displays selectivity for producing the C-9-chlorinated malbrancheamide B but does not affect the selectivity for bromination." evidence="6">
    <original>H</original>
    <variation>A</variation>
    <location>
        <position position="253"/>
    </location>
</feature>
<feature type="mutagenesis site" description="Displays selectivity for producing the C-8-chlorinated isomalbrancheamide B but does not affect the selectivity for bromination." evidence="6">
    <original>H</original>
    <variation>F</variation>
    <location>
        <position position="253"/>
    </location>
</feature>
<feature type="mutagenesis site" description="Decreases malA catalytic activity." evidence="6">
    <original>F</original>
    <variation>H</variation>
    <location>
        <position position="489"/>
    </location>
</feature>
<feature type="mutagenesis site" description="Abolishes malA catalytic activity." evidence="6">
    <original>E</original>
    <variation>A</variation>
    <variation>Q</variation>
    <location>
        <position position="494"/>
    </location>
</feature>
<feature type="mutagenesis site" description="Decreases but maintains slight catalytic activity." evidence="6">
    <original>E</original>
    <variation>D</variation>
    <location>
        <position position="494"/>
    </location>
</feature>
<feature type="mutagenesis site" description="Leads to an insoluble protein; when associated with S-616." evidence="6">
    <original>C</original>
    <variation>S</variation>
    <location>
        <position position="613"/>
    </location>
</feature>
<feature type="mutagenesis site" description="Leads to an insoluble protein; when associated with S-613." evidence="6">
    <original>C</original>
    <variation>S</variation>
    <location>
        <position position="616"/>
    </location>
</feature>
<feature type="helix" evidence="21">
    <location>
        <begin position="8"/>
        <end position="16"/>
    </location>
</feature>
<feature type="helix" evidence="21">
    <location>
        <begin position="20"/>
        <end position="25"/>
    </location>
</feature>
<feature type="strand" evidence="21">
    <location>
        <begin position="39"/>
        <end position="43"/>
    </location>
</feature>
<feature type="helix" evidence="21">
    <location>
        <begin position="47"/>
        <end position="59"/>
    </location>
</feature>
<feature type="strand" evidence="21">
    <location>
        <begin position="66"/>
        <end position="69"/>
    </location>
</feature>
<feature type="strand" evidence="21">
    <location>
        <begin position="71"/>
        <end position="74"/>
    </location>
</feature>
<feature type="helix" evidence="21">
    <location>
        <begin position="85"/>
        <end position="93"/>
    </location>
</feature>
<feature type="helix" evidence="21">
    <location>
        <begin position="98"/>
        <end position="104"/>
    </location>
</feature>
<feature type="strand" evidence="21">
    <location>
        <begin position="105"/>
        <end position="108"/>
    </location>
</feature>
<feature type="strand" evidence="21">
    <location>
        <begin position="111"/>
        <end position="116"/>
    </location>
</feature>
<feature type="strand" evidence="21">
    <location>
        <begin position="118"/>
        <end position="120"/>
    </location>
</feature>
<feature type="strand" evidence="21">
    <location>
        <begin position="124"/>
        <end position="127"/>
    </location>
</feature>
<feature type="turn" evidence="21">
    <location>
        <begin position="134"/>
        <end position="136"/>
    </location>
</feature>
<feature type="strand" evidence="21">
    <location>
        <begin position="139"/>
        <end position="141"/>
    </location>
</feature>
<feature type="helix" evidence="21">
    <location>
        <begin position="144"/>
        <end position="156"/>
    </location>
</feature>
<feature type="turn" evidence="21">
    <location>
        <begin position="157"/>
        <end position="159"/>
    </location>
</feature>
<feature type="strand" evidence="21">
    <location>
        <begin position="161"/>
        <end position="163"/>
    </location>
</feature>
<feature type="turn" evidence="21">
    <location>
        <begin position="170"/>
        <end position="172"/>
    </location>
</feature>
<feature type="strand" evidence="21">
    <location>
        <begin position="177"/>
        <end position="180"/>
    </location>
</feature>
<feature type="strand" evidence="21">
    <location>
        <begin position="182"/>
        <end position="189"/>
    </location>
</feature>
<feature type="strand" evidence="21">
    <location>
        <begin position="196"/>
        <end position="205"/>
    </location>
</feature>
<feature type="helix" evidence="21">
    <location>
        <begin position="208"/>
        <end position="210"/>
    </location>
</feature>
<feature type="helix" evidence="21">
    <location>
        <begin position="214"/>
        <end position="216"/>
    </location>
</feature>
<feature type="strand" evidence="21">
    <location>
        <begin position="228"/>
        <end position="236"/>
    </location>
</feature>
<feature type="strand" evidence="21">
    <location>
        <begin position="244"/>
        <end position="246"/>
    </location>
</feature>
<feature type="strand" evidence="21">
    <location>
        <begin position="253"/>
        <end position="259"/>
    </location>
</feature>
<feature type="strand" evidence="21">
    <location>
        <begin position="262"/>
        <end position="271"/>
    </location>
</feature>
<feature type="helix" evidence="21">
    <location>
        <begin position="277"/>
        <end position="293"/>
    </location>
</feature>
<feature type="helix" evidence="21">
    <location>
        <begin position="297"/>
        <end position="299"/>
    </location>
</feature>
<feature type="helix" evidence="21">
    <location>
        <begin position="303"/>
        <end position="310"/>
    </location>
</feature>
<feature type="strand" evidence="21">
    <location>
        <begin position="315"/>
        <end position="325"/>
    </location>
</feature>
<feature type="helix" evidence="21">
    <location>
        <begin position="335"/>
        <end position="337"/>
    </location>
</feature>
<feature type="helix" evidence="21">
    <location>
        <begin position="341"/>
        <end position="350"/>
    </location>
</feature>
<feature type="helix" evidence="21">
    <location>
        <begin position="354"/>
        <end position="360"/>
    </location>
</feature>
<feature type="strand" evidence="21">
    <location>
        <begin position="375"/>
        <end position="380"/>
    </location>
</feature>
<feature type="strand" evidence="21">
    <location>
        <begin position="394"/>
        <end position="396"/>
    </location>
</feature>
<feature type="helix" evidence="21">
    <location>
        <begin position="398"/>
        <end position="400"/>
    </location>
</feature>
<feature type="helix" evidence="21">
    <location>
        <begin position="410"/>
        <end position="413"/>
    </location>
</feature>
<feature type="helix" evidence="21">
    <location>
        <begin position="416"/>
        <end position="435"/>
    </location>
</feature>
<feature type="helix" evidence="21">
    <location>
        <begin position="438"/>
        <end position="473"/>
    </location>
</feature>
<feature type="helix" evidence="21">
    <location>
        <begin position="479"/>
        <end position="482"/>
    </location>
</feature>
<feature type="helix" evidence="21">
    <location>
        <begin position="484"/>
        <end position="492"/>
    </location>
</feature>
<feature type="helix" evidence="21">
    <location>
        <begin position="497"/>
        <end position="499"/>
    </location>
</feature>
<feature type="turn" evidence="21">
    <location>
        <begin position="502"/>
        <end position="504"/>
    </location>
</feature>
<feature type="helix" evidence="21">
    <location>
        <begin position="505"/>
        <end position="510"/>
    </location>
</feature>
<feature type="helix" evidence="21">
    <location>
        <begin position="513"/>
        <end position="515"/>
    </location>
</feature>
<feature type="helix" evidence="21">
    <location>
        <begin position="519"/>
        <end position="532"/>
    </location>
</feature>
<feature type="helix" evidence="21">
    <location>
        <begin position="543"/>
        <end position="563"/>
    </location>
</feature>
<feature type="helix" evidence="21">
    <location>
        <begin position="570"/>
        <end position="573"/>
    </location>
</feature>
<feature type="strand" evidence="19">
    <location>
        <begin position="579"/>
        <end position="581"/>
    </location>
</feature>
<feature type="strand" evidence="21">
    <location>
        <begin position="594"/>
        <end position="596"/>
    </location>
</feature>
<feature type="turn" evidence="21">
    <location>
        <begin position="598"/>
        <end position="600"/>
    </location>
</feature>
<feature type="strand" evidence="21">
    <location>
        <begin position="603"/>
        <end position="605"/>
    </location>
</feature>
<feature type="turn" evidence="21">
    <location>
        <begin position="614"/>
        <end position="616"/>
    </location>
</feature>
<feature type="helix" evidence="20">
    <location>
        <begin position="623"/>
        <end position="625"/>
    </location>
</feature>
<feature type="helix" evidence="21">
    <location>
        <begin position="635"/>
        <end position="644"/>
    </location>
</feature>
<feature type="strand" evidence="22">
    <location>
        <begin position="653"/>
        <end position="655"/>
    </location>
</feature>
<proteinExistence type="evidence at protein level"/>